<organism>
    <name type="scientific">Staphylococcus epidermidis (strain ATCC 35984 / DSM 28319 / BCRC 17069 / CCUG 31568 / BM 3577 / RP62A)</name>
    <dbReference type="NCBI Taxonomy" id="176279"/>
    <lineage>
        <taxon>Bacteria</taxon>
        <taxon>Bacillati</taxon>
        <taxon>Bacillota</taxon>
        <taxon>Bacilli</taxon>
        <taxon>Bacillales</taxon>
        <taxon>Staphylococcaceae</taxon>
        <taxon>Staphylococcus</taxon>
    </lineage>
</organism>
<keyword id="KW-0963">Cytoplasm</keyword>
<keyword id="KW-0312">Gluconeogenesis</keyword>
<keyword id="KW-0324">Glycolysis</keyword>
<keyword id="KW-0413">Isomerase</keyword>
<keyword id="KW-1185">Reference proteome</keyword>
<comment type="function">
    <text evidence="1">Involved in the gluconeogenesis. Catalyzes stereospecifically the conversion of dihydroxyacetone phosphate (DHAP) to D-glyceraldehyde-3-phosphate (G3P).</text>
</comment>
<comment type="catalytic activity">
    <reaction evidence="1">
        <text>D-glyceraldehyde 3-phosphate = dihydroxyacetone phosphate</text>
        <dbReference type="Rhea" id="RHEA:18585"/>
        <dbReference type="ChEBI" id="CHEBI:57642"/>
        <dbReference type="ChEBI" id="CHEBI:59776"/>
        <dbReference type="EC" id="5.3.1.1"/>
    </reaction>
</comment>
<comment type="pathway">
    <text evidence="1">Carbohydrate biosynthesis; gluconeogenesis.</text>
</comment>
<comment type="pathway">
    <text evidence="1">Carbohydrate degradation; glycolysis; D-glyceraldehyde 3-phosphate from glycerone phosphate: step 1/1.</text>
</comment>
<comment type="subunit">
    <text evidence="1">Homodimer.</text>
</comment>
<comment type="subcellular location">
    <subcellularLocation>
        <location evidence="1">Cytoplasm</location>
    </subcellularLocation>
</comment>
<comment type="similarity">
    <text evidence="1">Belongs to the triosephosphate isomerase family.</text>
</comment>
<protein>
    <recommendedName>
        <fullName evidence="1">Triosephosphate isomerase</fullName>
        <shortName evidence="1">TIM</shortName>
        <shortName evidence="1">TPI</shortName>
        <ecNumber evidence="1">5.3.1.1</ecNumber>
    </recommendedName>
    <alternativeName>
        <fullName evidence="1">Triose-phosphate isomerase</fullName>
    </alternativeName>
</protein>
<accession>Q5HQV2</accession>
<feature type="chain" id="PRO_0000090291" description="Triosephosphate isomerase">
    <location>
        <begin position="1"/>
        <end position="253"/>
    </location>
</feature>
<feature type="active site" description="Electrophile" evidence="1">
    <location>
        <position position="97"/>
    </location>
</feature>
<feature type="active site" description="Proton acceptor" evidence="1">
    <location>
        <position position="169"/>
    </location>
</feature>
<feature type="binding site" evidence="1">
    <location>
        <begin position="9"/>
        <end position="11"/>
    </location>
    <ligand>
        <name>substrate</name>
    </ligand>
</feature>
<feature type="binding site" evidence="1">
    <location>
        <position position="175"/>
    </location>
    <ligand>
        <name>substrate</name>
    </ligand>
</feature>
<feature type="binding site" evidence="1">
    <location>
        <position position="215"/>
    </location>
    <ligand>
        <name>substrate</name>
    </ligand>
</feature>
<feature type="binding site" evidence="1">
    <location>
        <begin position="236"/>
        <end position="237"/>
    </location>
    <ligand>
        <name>substrate</name>
    </ligand>
</feature>
<proteinExistence type="inferred from homology"/>
<name>TPIS_STAEQ</name>
<evidence type="ECO:0000255" key="1">
    <source>
        <dbReference type="HAMAP-Rule" id="MF_00147"/>
    </source>
</evidence>
<dbReference type="EC" id="5.3.1.1" evidence="1"/>
<dbReference type="EMBL" id="CP000029">
    <property type="protein sequence ID" value="AAW53875.1"/>
    <property type="molecule type" value="Genomic_DNA"/>
</dbReference>
<dbReference type="RefSeq" id="WP_001829574.1">
    <property type="nucleotide sequence ID" value="NC_002976.3"/>
</dbReference>
<dbReference type="SMR" id="Q5HQV2"/>
<dbReference type="STRING" id="176279.SERP0444"/>
<dbReference type="GeneID" id="50019293"/>
<dbReference type="KEGG" id="ser:SERP0444"/>
<dbReference type="eggNOG" id="COG0149">
    <property type="taxonomic scope" value="Bacteria"/>
</dbReference>
<dbReference type="HOGENOM" id="CLU_024251_2_3_9"/>
<dbReference type="UniPathway" id="UPA00109">
    <property type="reaction ID" value="UER00189"/>
</dbReference>
<dbReference type="UniPathway" id="UPA00138"/>
<dbReference type="Proteomes" id="UP000000531">
    <property type="component" value="Chromosome"/>
</dbReference>
<dbReference type="GO" id="GO:0005829">
    <property type="term" value="C:cytosol"/>
    <property type="evidence" value="ECO:0007669"/>
    <property type="project" value="TreeGrafter"/>
</dbReference>
<dbReference type="GO" id="GO:0004807">
    <property type="term" value="F:triose-phosphate isomerase activity"/>
    <property type="evidence" value="ECO:0007669"/>
    <property type="project" value="UniProtKB-UniRule"/>
</dbReference>
<dbReference type="GO" id="GO:0006094">
    <property type="term" value="P:gluconeogenesis"/>
    <property type="evidence" value="ECO:0007669"/>
    <property type="project" value="UniProtKB-UniRule"/>
</dbReference>
<dbReference type="GO" id="GO:0046166">
    <property type="term" value="P:glyceraldehyde-3-phosphate biosynthetic process"/>
    <property type="evidence" value="ECO:0007669"/>
    <property type="project" value="TreeGrafter"/>
</dbReference>
<dbReference type="GO" id="GO:0019563">
    <property type="term" value="P:glycerol catabolic process"/>
    <property type="evidence" value="ECO:0007669"/>
    <property type="project" value="TreeGrafter"/>
</dbReference>
<dbReference type="GO" id="GO:0006096">
    <property type="term" value="P:glycolytic process"/>
    <property type="evidence" value="ECO:0007669"/>
    <property type="project" value="UniProtKB-UniRule"/>
</dbReference>
<dbReference type="CDD" id="cd00311">
    <property type="entry name" value="TIM"/>
    <property type="match status" value="1"/>
</dbReference>
<dbReference type="FunFam" id="3.20.20.70:FF:000016">
    <property type="entry name" value="Triosephosphate isomerase"/>
    <property type="match status" value="1"/>
</dbReference>
<dbReference type="Gene3D" id="3.20.20.70">
    <property type="entry name" value="Aldolase class I"/>
    <property type="match status" value="1"/>
</dbReference>
<dbReference type="HAMAP" id="MF_00147_B">
    <property type="entry name" value="TIM_B"/>
    <property type="match status" value="1"/>
</dbReference>
<dbReference type="InterPro" id="IPR013785">
    <property type="entry name" value="Aldolase_TIM"/>
</dbReference>
<dbReference type="InterPro" id="IPR035990">
    <property type="entry name" value="TIM_sf"/>
</dbReference>
<dbReference type="InterPro" id="IPR022896">
    <property type="entry name" value="TrioseP_Isoase_bac/euk"/>
</dbReference>
<dbReference type="InterPro" id="IPR000652">
    <property type="entry name" value="Triosephosphate_isomerase"/>
</dbReference>
<dbReference type="InterPro" id="IPR020861">
    <property type="entry name" value="Triosephosphate_isomerase_AS"/>
</dbReference>
<dbReference type="NCBIfam" id="TIGR00419">
    <property type="entry name" value="tim"/>
    <property type="match status" value="1"/>
</dbReference>
<dbReference type="PANTHER" id="PTHR21139">
    <property type="entry name" value="TRIOSEPHOSPHATE ISOMERASE"/>
    <property type="match status" value="1"/>
</dbReference>
<dbReference type="PANTHER" id="PTHR21139:SF42">
    <property type="entry name" value="TRIOSEPHOSPHATE ISOMERASE"/>
    <property type="match status" value="1"/>
</dbReference>
<dbReference type="Pfam" id="PF00121">
    <property type="entry name" value="TIM"/>
    <property type="match status" value="1"/>
</dbReference>
<dbReference type="SUPFAM" id="SSF51351">
    <property type="entry name" value="Triosephosphate isomerase (TIM)"/>
    <property type="match status" value="1"/>
</dbReference>
<dbReference type="PROSITE" id="PS00171">
    <property type="entry name" value="TIM_1"/>
    <property type="match status" value="1"/>
</dbReference>
<dbReference type="PROSITE" id="PS51440">
    <property type="entry name" value="TIM_2"/>
    <property type="match status" value="1"/>
</dbReference>
<sequence>MRTPIIAGNWKMNKTVQEAKDFVNELPTLPDPKEVESVICAPTIQLDALVTAVKDGKAKGLKIGAQNAYFEESGAYTGETSPVALSELGVKYVVIGHSERRDYFHETDEEVNKKAHAIFNHGMTPIICVGESDEEREAGKANKIVGNQVKKAVEGLSDDQLKEVVIAYEPIWAIGTGKSSTSEDANEMCAHVRQTLADLSSQEVADATRIQYGGSVKPNNIKEYMAQSDIDGALVGGASLKVEDFVQLLEGAK</sequence>
<gene>
    <name evidence="1" type="primary">tpiA</name>
    <name type="ordered locus">SERP0444</name>
</gene>
<reference key="1">
    <citation type="journal article" date="2005" name="J. Bacteriol.">
        <title>Insights on evolution of virulence and resistance from the complete genome analysis of an early methicillin-resistant Staphylococcus aureus strain and a biofilm-producing methicillin-resistant Staphylococcus epidermidis strain.</title>
        <authorList>
            <person name="Gill S.R."/>
            <person name="Fouts D.E."/>
            <person name="Archer G.L."/>
            <person name="Mongodin E.F."/>
            <person name="DeBoy R.T."/>
            <person name="Ravel J."/>
            <person name="Paulsen I.T."/>
            <person name="Kolonay J.F."/>
            <person name="Brinkac L.M."/>
            <person name="Beanan M.J."/>
            <person name="Dodson R.J."/>
            <person name="Daugherty S.C."/>
            <person name="Madupu R."/>
            <person name="Angiuoli S.V."/>
            <person name="Durkin A.S."/>
            <person name="Haft D.H."/>
            <person name="Vamathevan J.J."/>
            <person name="Khouri H."/>
            <person name="Utterback T.R."/>
            <person name="Lee C."/>
            <person name="Dimitrov G."/>
            <person name="Jiang L."/>
            <person name="Qin H."/>
            <person name="Weidman J."/>
            <person name="Tran K."/>
            <person name="Kang K.H."/>
            <person name="Hance I.R."/>
            <person name="Nelson K.E."/>
            <person name="Fraser C.M."/>
        </authorList>
    </citation>
    <scope>NUCLEOTIDE SEQUENCE [LARGE SCALE GENOMIC DNA]</scope>
    <source>
        <strain>ATCC 35984 / DSM 28319 / BCRC 17069 / CCUG 31568 / BM 3577 / RP62A</strain>
    </source>
</reference>